<feature type="chain" id="PRO_0000146977" description="Glutamate decarboxylase">
    <location>
        <begin position="1"/>
        <end position="585"/>
    </location>
</feature>
<feature type="region of interest" description="Disordered" evidence="2">
    <location>
        <begin position="35"/>
        <end position="60"/>
    </location>
</feature>
<feature type="compositionally biased region" description="Polar residues" evidence="2">
    <location>
        <begin position="35"/>
        <end position="56"/>
    </location>
</feature>
<feature type="modified residue" description="N6-(pyridoxal phosphate)lysine" evidence="1">
    <location>
        <position position="318"/>
    </location>
</feature>
<reference key="1">
    <citation type="journal article" date="1997" name="Nature">
        <title>The nucleotide sequence of Saccharomyces cerevisiae chromosome XIII.</title>
        <authorList>
            <person name="Bowman S."/>
            <person name="Churcher C.M."/>
            <person name="Badcock K."/>
            <person name="Brown D."/>
            <person name="Chillingworth T."/>
            <person name="Connor R."/>
            <person name="Dedman K."/>
            <person name="Devlin K."/>
            <person name="Gentles S."/>
            <person name="Hamlin N."/>
            <person name="Hunt S."/>
            <person name="Jagels K."/>
            <person name="Lye G."/>
            <person name="Moule S."/>
            <person name="Odell C."/>
            <person name="Pearson D."/>
            <person name="Rajandream M.A."/>
            <person name="Rice P."/>
            <person name="Skelton J."/>
            <person name="Walsh S.V."/>
            <person name="Whitehead S."/>
            <person name="Barrell B.G."/>
        </authorList>
    </citation>
    <scope>NUCLEOTIDE SEQUENCE [LARGE SCALE GENOMIC DNA]</scope>
    <source>
        <strain>ATCC 204508 / S288c</strain>
    </source>
</reference>
<reference key="2">
    <citation type="journal article" date="2014" name="G3 (Bethesda)">
        <title>The reference genome sequence of Saccharomyces cerevisiae: Then and now.</title>
        <authorList>
            <person name="Engel S.R."/>
            <person name="Dietrich F.S."/>
            <person name="Fisk D.G."/>
            <person name="Binkley G."/>
            <person name="Balakrishnan R."/>
            <person name="Costanzo M.C."/>
            <person name="Dwight S.S."/>
            <person name="Hitz B.C."/>
            <person name="Karra K."/>
            <person name="Nash R.S."/>
            <person name="Weng S."/>
            <person name="Wong E.D."/>
            <person name="Lloyd P."/>
            <person name="Skrzypek M.S."/>
            <person name="Miyasato S.R."/>
            <person name="Simison M."/>
            <person name="Cherry J.M."/>
        </authorList>
    </citation>
    <scope>GENOME REANNOTATION</scope>
    <source>
        <strain>ATCC 204508 / S288c</strain>
    </source>
</reference>
<reference key="3">
    <citation type="journal article" date="2003" name="Nature">
        <title>Global analysis of protein expression in yeast.</title>
        <authorList>
            <person name="Ghaemmaghami S."/>
            <person name="Huh W.-K."/>
            <person name="Bower K."/>
            <person name="Howson R.W."/>
            <person name="Belle A."/>
            <person name="Dephoure N."/>
            <person name="O'Shea E.K."/>
            <person name="Weissman J.S."/>
        </authorList>
    </citation>
    <scope>LEVEL OF PROTEIN EXPRESSION [LARGE SCALE ANALYSIS]</scope>
</reference>
<protein>
    <recommendedName>
        <fullName>Glutamate decarboxylase</fullName>
        <shortName>GAD</shortName>
        <ecNumber>4.1.1.15</ecNumber>
    </recommendedName>
</protein>
<gene>
    <name type="primary">GAD1</name>
    <name type="ordered locus">YMR250W</name>
    <name type="ORF">YM9920.04</name>
</gene>
<accession>Q04792</accession>
<accession>D6W076</accession>
<dbReference type="EC" id="4.1.1.15"/>
<dbReference type="EMBL" id="Z48639">
    <property type="protein sequence ID" value="CAA88577.1"/>
    <property type="molecule type" value="Genomic_DNA"/>
</dbReference>
<dbReference type="EMBL" id="BK006946">
    <property type="protein sequence ID" value="DAA10150.1"/>
    <property type="molecule type" value="Genomic_DNA"/>
</dbReference>
<dbReference type="PIR" id="S53072">
    <property type="entry name" value="S53072"/>
</dbReference>
<dbReference type="RefSeq" id="NP_013976.1">
    <property type="nucleotide sequence ID" value="NM_001182756.1"/>
</dbReference>
<dbReference type="SMR" id="Q04792"/>
<dbReference type="BioGRID" id="35428">
    <property type="interactions" value="80"/>
</dbReference>
<dbReference type="DIP" id="DIP-2552N"/>
<dbReference type="FunCoup" id="Q04792">
    <property type="interactions" value="464"/>
</dbReference>
<dbReference type="IntAct" id="Q04792">
    <property type="interactions" value="3"/>
</dbReference>
<dbReference type="MINT" id="Q04792"/>
<dbReference type="STRING" id="4932.YMR250W"/>
<dbReference type="iPTMnet" id="Q04792"/>
<dbReference type="PaxDb" id="4932-YMR250W"/>
<dbReference type="PeptideAtlas" id="Q04792"/>
<dbReference type="EnsemblFungi" id="YMR250W_mRNA">
    <property type="protein sequence ID" value="YMR250W"/>
    <property type="gene ID" value="YMR250W"/>
</dbReference>
<dbReference type="GeneID" id="855291"/>
<dbReference type="KEGG" id="sce:YMR250W"/>
<dbReference type="AGR" id="SGD:S000004862"/>
<dbReference type="SGD" id="S000004862">
    <property type="gene designation" value="GAD1"/>
</dbReference>
<dbReference type="VEuPathDB" id="FungiDB:YMR250W"/>
<dbReference type="eggNOG" id="KOG1383">
    <property type="taxonomic scope" value="Eukaryota"/>
</dbReference>
<dbReference type="HOGENOM" id="CLU_019582_2_3_1"/>
<dbReference type="InParanoid" id="Q04792"/>
<dbReference type="OMA" id="KNIMQNC"/>
<dbReference type="OrthoDB" id="5152799at2759"/>
<dbReference type="BioCyc" id="YEAST:YMR250W-MONOMER"/>
<dbReference type="BioGRID-ORCS" id="855291">
    <property type="hits" value="0 hits in 10 CRISPR screens"/>
</dbReference>
<dbReference type="PRO" id="PR:Q04792"/>
<dbReference type="Proteomes" id="UP000002311">
    <property type="component" value="Chromosome XIII"/>
</dbReference>
<dbReference type="RNAct" id="Q04792">
    <property type="molecule type" value="protein"/>
</dbReference>
<dbReference type="GO" id="GO:0005737">
    <property type="term" value="C:cytoplasm"/>
    <property type="evidence" value="ECO:0007005"/>
    <property type="project" value="SGD"/>
</dbReference>
<dbReference type="GO" id="GO:0005829">
    <property type="term" value="C:cytosol"/>
    <property type="evidence" value="ECO:0000318"/>
    <property type="project" value="GO_Central"/>
</dbReference>
<dbReference type="GO" id="GO:0004351">
    <property type="term" value="F:glutamate decarboxylase activity"/>
    <property type="evidence" value="ECO:0000315"/>
    <property type="project" value="SGD"/>
</dbReference>
<dbReference type="GO" id="GO:0030170">
    <property type="term" value="F:pyridoxal phosphate binding"/>
    <property type="evidence" value="ECO:0007669"/>
    <property type="project" value="InterPro"/>
</dbReference>
<dbReference type="GO" id="GO:0034599">
    <property type="term" value="P:cellular response to oxidative stress"/>
    <property type="evidence" value="ECO:0000315"/>
    <property type="project" value="SGD"/>
</dbReference>
<dbReference type="GO" id="GO:0006538">
    <property type="term" value="P:glutamate catabolic process"/>
    <property type="evidence" value="ECO:0000315"/>
    <property type="project" value="SGD"/>
</dbReference>
<dbReference type="FunFam" id="3.40.640.10:FF:000017">
    <property type="entry name" value="Glutamate decarboxylase"/>
    <property type="match status" value="1"/>
</dbReference>
<dbReference type="FunFam" id="3.90.1150.160:FF:000005">
    <property type="entry name" value="Glutamate decarboxylase"/>
    <property type="match status" value="1"/>
</dbReference>
<dbReference type="Gene3D" id="3.90.1150.160">
    <property type="match status" value="1"/>
</dbReference>
<dbReference type="Gene3D" id="4.10.280.50">
    <property type="match status" value="1"/>
</dbReference>
<dbReference type="Gene3D" id="3.40.640.10">
    <property type="entry name" value="Type I PLP-dependent aspartate aminotransferase-like (Major domain)"/>
    <property type="match status" value="1"/>
</dbReference>
<dbReference type="InterPro" id="IPR010107">
    <property type="entry name" value="Glutamate_decarboxylase"/>
</dbReference>
<dbReference type="InterPro" id="IPR002129">
    <property type="entry name" value="PyrdxlP-dep_de-COase"/>
</dbReference>
<dbReference type="InterPro" id="IPR015424">
    <property type="entry name" value="PyrdxlP-dep_Trfase"/>
</dbReference>
<dbReference type="InterPro" id="IPR015421">
    <property type="entry name" value="PyrdxlP-dep_Trfase_major"/>
</dbReference>
<dbReference type="NCBIfam" id="TIGR01788">
    <property type="entry name" value="Glu-decarb-GAD"/>
    <property type="match status" value="1"/>
</dbReference>
<dbReference type="PANTHER" id="PTHR43321">
    <property type="entry name" value="GLUTAMATE DECARBOXYLASE"/>
    <property type="match status" value="1"/>
</dbReference>
<dbReference type="PANTHER" id="PTHR43321:SF3">
    <property type="entry name" value="GLUTAMATE DECARBOXYLASE"/>
    <property type="match status" value="1"/>
</dbReference>
<dbReference type="Pfam" id="PF00282">
    <property type="entry name" value="Pyridoxal_deC"/>
    <property type="match status" value="1"/>
</dbReference>
<dbReference type="SUPFAM" id="SSF53383">
    <property type="entry name" value="PLP-dependent transferases"/>
    <property type="match status" value="1"/>
</dbReference>
<evidence type="ECO:0000250" key="1"/>
<evidence type="ECO:0000256" key="2">
    <source>
        <dbReference type="SAM" id="MobiDB-lite"/>
    </source>
</evidence>
<evidence type="ECO:0000269" key="3">
    <source>
    </source>
</evidence>
<evidence type="ECO:0000305" key="4"/>
<keyword id="KW-0210">Decarboxylase</keyword>
<keyword id="KW-0456">Lyase</keyword>
<keyword id="KW-0663">Pyridoxal phosphate</keyword>
<keyword id="KW-1185">Reference proteome</keyword>
<sequence length="585" mass="65990">MLHRHGSKQKNFENIAGKVVHDLAGLQLLSNDVQKSAVQSGHQGSNNMRDTSSQGMANKYSVPKKGLPADLSYQLIHNELTLDGNPHLNLASFVNTFTTDQARKLIDENLTKNLADNDEYPQLIELTQRCISMLAQLWHANPDEEPIGCATTGSSEAIMLGGLAMKKRWEHRMKNAGKDASKPNIIMSSACQVALEKFTRYFEVECRLVPVSHRSHHMLDPESLWDYVDENTIGCFVILGTTYTGHLENVEKVADVLSQIEAKHPDWSNTDIPIHADGASGGFIIPFGFEKEHMKAYGMERWGFNHPRVVSMNTSGHKFGLTTPGLGWVLWRDESLLADELRFKLKYLGGVEETFGLNFSRPGFQVVHQYFNFVSLGHSGYRTQFQNSLFVARAFSFELLNSSKLPGCFEIVSSIHESIENDSAPKSVKDYWEHPQAYKPGVPLVAFKLSKKFHEEYPEVPQAILSSLLRGRGWIIPNYPLPKATDGSDEKEVLRVVFRSEMKLDLAQLLIVDIESILTKLIHSYEKVCHHIELASEQTPERKSSFIYEMLLALASPQDDIPTPDEIEKKNKLKETTTRNYRGTC</sequence>
<proteinExistence type="evidence at protein level"/>
<organism>
    <name type="scientific">Saccharomyces cerevisiae (strain ATCC 204508 / S288c)</name>
    <name type="common">Baker's yeast</name>
    <dbReference type="NCBI Taxonomy" id="559292"/>
    <lineage>
        <taxon>Eukaryota</taxon>
        <taxon>Fungi</taxon>
        <taxon>Dikarya</taxon>
        <taxon>Ascomycota</taxon>
        <taxon>Saccharomycotina</taxon>
        <taxon>Saccharomycetes</taxon>
        <taxon>Saccharomycetales</taxon>
        <taxon>Saccharomycetaceae</taxon>
        <taxon>Saccharomyces</taxon>
    </lineage>
</organism>
<comment type="catalytic activity">
    <reaction>
        <text>L-glutamate + H(+) = 4-aminobutanoate + CO2</text>
        <dbReference type="Rhea" id="RHEA:17785"/>
        <dbReference type="ChEBI" id="CHEBI:15378"/>
        <dbReference type="ChEBI" id="CHEBI:16526"/>
        <dbReference type="ChEBI" id="CHEBI:29985"/>
        <dbReference type="ChEBI" id="CHEBI:59888"/>
        <dbReference type="EC" id="4.1.1.15"/>
    </reaction>
</comment>
<comment type="cofactor">
    <cofactor evidence="1">
        <name>pyridoxal 5'-phosphate</name>
        <dbReference type="ChEBI" id="CHEBI:597326"/>
    </cofactor>
</comment>
<comment type="miscellaneous">
    <text evidence="3">Present with 1200 molecules/cell in log phase SD medium.</text>
</comment>
<comment type="similarity">
    <text evidence="4">Belongs to the group II decarboxylase family.</text>
</comment>
<name>DCE_YEAST</name>